<keyword id="KW-0227">DNA damage</keyword>
<keyword id="KW-0233">DNA recombination</keyword>
<keyword id="KW-0234">DNA repair</keyword>
<organism>
    <name type="scientific">Staphylococcus aureus (strain Mu3 / ATCC 700698)</name>
    <dbReference type="NCBI Taxonomy" id="418127"/>
    <lineage>
        <taxon>Bacteria</taxon>
        <taxon>Bacillati</taxon>
        <taxon>Bacillota</taxon>
        <taxon>Bacilli</taxon>
        <taxon>Bacillales</taxon>
        <taxon>Staphylococcaceae</taxon>
        <taxon>Staphylococcus</taxon>
    </lineage>
</organism>
<protein>
    <recommendedName>
        <fullName evidence="1">DNA repair protein RecO</fullName>
    </recommendedName>
    <alternativeName>
        <fullName evidence="1">Recombination protein O</fullName>
    </alternativeName>
</protein>
<reference key="1">
    <citation type="journal article" date="2008" name="Antimicrob. Agents Chemother.">
        <title>Mutated response regulator graR is responsible for phenotypic conversion of Staphylococcus aureus from heterogeneous vancomycin-intermediate resistance to vancomycin-intermediate resistance.</title>
        <authorList>
            <person name="Neoh H.-M."/>
            <person name="Cui L."/>
            <person name="Yuzawa H."/>
            <person name="Takeuchi F."/>
            <person name="Matsuo M."/>
            <person name="Hiramatsu K."/>
        </authorList>
    </citation>
    <scope>NUCLEOTIDE SEQUENCE [LARGE SCALE GENOMIC DNA]</scope>
    <source>
        <strain>Mu3 / ATCC 700698</strain>
    </source>
</reference>
<dbReference type="EMBL" id="AP009324">
    <property type="protein sequence ID" value="BAF78436.1"/>
    <property type="molecule type" value="Genomic_DNA"/>
</dbReference>
<dbReference type="SMR" id="A7X2W3"/>
<dbReference type="KEGG" id="saw:SAHV_1553"/>
<dbReference type="HOGENOM" id="CLU_066632_4_0_9"/>
<dbReference type="GO" id="GO:0043590">
    <property type="term" value="C:bacterial nucleoid"/>
    <property type="evidence" value="ECO:0007669"/>
    <property type="project" value="TreeGrafter"/>
</dbReference>
<dbReference type="GO" id="GO:0006310">
    <property type="term" value="P:DNA recombination"/>
    <property type="evidence" value="ECO:0007669"/>
    <property type="project" value="UniProtKB-UniRule"/>
</dbReference>
<dbReference type="GO" id="GO:0006302">
    <property type="term" value="P:double-strand break repair"/>
    <property type="evidence" value="ECO:0007669"/>
    <property type="project" value="TreeGrafter"/>
</dbReference>
<dbReference type="Gene3D" id="2.40.50.140">
    <property type="entry name" value="Nucleic acid-binding proteins"/>
    <property type="match status" value="1"/>
</dbReference>
<dbReference type="Gene3D" id="1.20.1440.120">
    <property type="entry name" value="Recombination protein O, C-terminal domain"/>
    <property type="match status" value="1"/>
</dbReference>
<dbReference type="HAMAP" id="MF_00201">
    <property type="entry name" value="RecO"/>
    <property type="match status" value="1"/>
</dbReference>
<dbReference type="InterPro" id="IPR037278">
    <property type="entry name" value="ARFGAP/RecO"/>
</dbReference>
<dbReference type="InterPro" id="IPR022572">
    <property type="entry name" value="DNA_rep/recomb_RecO_N"/>
</dbReference>
<dbReference type="InterPro" id="IPR012340">
    <property type="entry name" value="NA-bd_OB-fold"/>
</dbReference>
<dbReference type="InterPro" id="IPR003717">
    <property type="entry name" value="RecO"/>
</dbReference>
<dbReference type="InterPro" id="IPR042242">
    <property type="entry name" value="RecO_C"/>
</dbReference>
<dbReference type="NCBIfam" id="TIGR00613">
    <property type="entry name" value="reco"/>
    <property type="match status" value="1"/>
</dbReference>
<dbReference type="PANTHER" id="PTHR33991">
    <property type="entry name" value="DNA REPAIR PROTEIN RECO"/>
    <property type="match status" value="1"/>
</dbReference>
<dbReference type="PANTHER" id="PTHR33991:SF1">
    <property type="entry name" value="DNA REPAIR PROTEIN RECO"/>
    <property type="match status" value="1"/>
</dbReference>
<dbReference type="Pfam" id="PF02565">
    <property type="entry name" value="RecO_C"/>
    <property type="match status" value="1"/>
</dbReference>
<dbReference type="Pfam" id="PF11967">
    <property type="entry name" value="RecO_N"/>
    <property type="match status" value="1"/>
</dbReference>
<dbReference type="SUPFAM" id="SSF57863">
    <property type="entry name" value="ArfGap/RecO-like zinc finger"/>
    <property type="match status" value="1"/>
</dbReference>
<dbReference type="SUPFAM" id="SSF50249">
    <property type="entry name" value="Nucleic acid-binding proteins"/>
    <property type="match status" value="1"/>
</dbReference>
<comment type="function">
    <text evidence="1">Involved in DNA repair and RecF pathway recombination.</text>
</comment>
<comment type="similarity">
    <text evidence="1">Belongs to the RecO family.</text>
</comment>
<accession>A7X2W3</accession>
<gene>
    <name evidence="1" type="primary">recO</name>
    <name type="ordered locus">SAHV_1553</name>
</gene>
<evidence type="ECO:0000255" key="1">
    <source>
        <dbReference type="HAMAP-Rule" id="MF_00201"/>
    </source>
</evidence>
<name>RECO_STAA1</name>
<sequence>MLMRQKGIIIKAVDYGESDKIITILNEHGAKVPLMARRAKKVKTGLQAQTQLFVYGLFIYNQWRGMGTLNSVDVISQHYKLQMDLYVSSYASLAAETIERSMDEGDIAPYNYQLLQFVLEKIESGTSAQLMSVVVMLKCMKRFGFTASFNRCAVSGNDTQADLIGYSFKFDGAISRQEASKDVHAVILSNKTLYLLDVLQKLPIDKMNSLNIHQEIIDEMSDIILMLYREYAGMFFKSQKLINQLKRLEQ</sequence>
<feature type="chain" id="PRO_1000012158" description="DNA repair protein RecO">
    <location>
        <begin position="1"/>
        <end position="250"/>
    </location>
</feature>
<proteinExistence type="inferred from homology"/>